<proteinExistence type="inferred from homology"/>
<gene>
    <name evidence="1" type="primary">folE2</name>
    <name type="ordered locus">TRQ2_0906</name>
</gene>
<accession>B1LAA9</accession>
<sequence>MKDVQNEKDPRMVPLKKVGIKDLHWPLKVILKEDGYQSTVAQISCSVDLHREKRGIHMSRFIEVLNKLEVITPQIFEEILDDLIEIMEAKRAHLEIHFPYFIWKESPVSRKKSPLKVDCFVEAEKEKNFSFKIGVRTPVHTLCPCSKEISDYGAHNQRAFVEITVKTRKFIWFEDLVEIAEKNASSPLYTLLKRPDEKFVTEKAYENPRFVEDVARDVALELEKDPRITWYRVYVESMESIHNHNAFACVEKGDFVLEG</sequence>
<name>GCH4_THESQ</name>
<reference key="1">
    <citation type="journal article" date="2011" name="J. Bacteriol.">
        <title>Genome sequence of Thermotoga sp. strain RQ2, a hyperthermophilic bacterium isolated from a geothermally heated region of the seafloor near Ribeira Quente, the Azores.</title>
        <authorList>
            <person name="Swithers K.S."/>
            <person name="DiPippo J.L."/>
            <person name="Bruce D.C."/>
            <person name="Detter C."/>
            <person name="Tapia R."/>
            <person name="Han S."/>
            <person name="Saunders E."/>
            <person name="Goodwin L.A."/>
            <person name="Han J."/>
            <person name="Woyke T."/>
            <person name="Pitluck S."/>
            <person name="Pennacchio L."/>
            <person name="Nolan M."/>
            <person name="Mikhailova N."/>
            <person name="Lykidis A."/>
            <person name="Land M.L."/>
            <person name="Brettin T."/>
            <person name="Stetter K.O."/>
            <person name="Nelson K.E."/>
            <person name="Gogarten J.P."/>
            <person name="Noll K.M."/>
        </authorList>
    </citation>
    <scope>NUCLEOTIDE SEQUENCE [LARGE SCALE GENOMIC DNA]</scope>
    <source>
        <strain>RQ2</strain>
    </source>
</reference>
<organism>
    <name type="scientific">Thermotoga sp. (strain RQ2)</name>
    <dbReference type="NCBI Taxonomy" id="126740"/>
    <lineage>
        <taxon>Bacteria</taxon>
        <taxon>Thermotogati</taxon>
        <taxon>Thermotogota</taxon>
        <taxon>Thermotogae</taxon>
        <taxon>Thermotogales</taxon>
        <taxon>Thermotogaceae</taxon>
        <taxon>Thermotoga</taxon>
    </lineage>
</organism>
<protein>
    <recommendedName>
        <fullName evidence="1">GTP cyclohydrolase FolE2</fullName>
        <ecNumber evidence="1">3.5.4.16</ecNumber>
    </recommendedName>
</protein>
<evidence type="ECO:0000255" key="1">
    <source>
        <dbReference type="HAMAP-Rule" id="MF_01527"/>
    </source>
</evidence>
<feature type="chain" id="PRO_0000372035" description="GTP cyclohydrolase FolE2">
    <location>
        <begin position="1"/>
        <end position="259"/>
    </location>
</feature>
<feature type="site" description="May be catalytically important" evidence="1">
    <location>
        <position position="143"/>
    </location>
</feature>
<dbReference type="EC" id="3.5.4.16" evidence="1"/>
<dbReference type="EMBL" id="CP000969">
    <property type="protein sequence ID" value="ACB09257.1"/>
    <property type="molecule type" value="Genomic_DNA"/>
</dbReference>
<dbReference type="RefSeq" id="WP_004082504.1">
    <property type="nucleotide sequence ID" value="NC_010483.1"/>
</dbReference>
<dbReference type="SMR" id="B1LAA9"/>
<dbReference type="KEGG" id="trq:TRQ2_0906"/>
<dbReference type="HOGENOM" id="CLU_062816_1_1_0"/>
<dbReference type="UniPathway" id="UPA00848">
    <property type="reaction ID" value="UER00151"/>
</dbReference>
<dbReference type="Proteomes" id="UP000001687">
    <property type="component" value="Chromosome"/>
</dbReference>
<dbReference type="GO" id="GO:0003934">
    <property type="term" value="F:GTP cyclohydrolase I activity"/>
    <property type="evidence" value="ECO:0007669"/>
    <property type="project" value="UniProtKB-UniRule"/>
</dbReference>
<dbReference type="GO" id="GO:0046654">
    <property type="term" value="P:tetrahydrofolate biosynthetic process"/>
    <property type="evidence" value="ECO:0007669"/>
    <property type="project" value="UniProtKB-UniRule"/>
</dbReference>
<dbReference type="Gene3D" id="3.10.270.10">
    <property type="entry name" value="Urate Oxidase"/>
    <property type="match status" value="1"/>
</dbReference>
<dbReference type="HAMAP" id="MF_01527_B">
    <property type="entry name" value="GTP_cyclohydrol_B"/>
    <property type="match status" value="1"/>
</dbReference>
<dbReference type="InterPro" id="IPR022838">
    <property type="entry name" value="GTP_cyclohydrolase_FolE2"/>
</dbReference>
<dbReference type="InterPro" id="IPR003801">
    <property type="entry name" value="GTP_cyclohydrolase_FolE2/MptA"/>
</dbReference>
<dbReference type="NCBIfam" id="NF010200">
    <property type="entry name" value="PRK13674.1-1"/>
    <property type="match status" value="1"/>
</dbReference>
<dbReference type="PANTHER" id="PTHR36445">
    <property type="entry name" value="GTP CYCLOHYDROLASE MPTA"/>
    <property type="match status" value="1"/>
</dbReference>
<dbReference type="PANTHER" id="PTHR36445:SF1">
    <property type="entry name" value="GTP CYCLOHYDROLASE MPTA"/>
    <property type="match status" value="1"/>
</dbReference>
<dbReference type="Pfam" id="PF02649">
    <property type="entry name" value="GCHY-1"/>
    <property type="match status" value="1"/>
</dbReference>
<comment type="function">
    <text evidence="1">Converts GTP to 7,8-dihydroneopterin triphosphate.</text>
</comment>
<comment type="catalytic activity">
    <reaction evidence="1">
        <text>GTP + H2O = 7,8-dihydroneopterin 3'-triphosphate + formate + H(+)</text>
        <dbReference type="Rhea" id="RHEA:17473"/>
        <dbReference type="ChEBI" id="CHEBI:15377"/>
        <dbReference type="ChEBI" id="CHEBI:15378"/>
        <dbReference type="ChEBI" id="CHEBI:15740"/>
        <dbReference type="ChEBI" id="CHEBI:37565"/>
        <dbReference type="ChEBI" id="CHEBI:58462"/>
        <dbReference type="EC" id="3.5.4.16"/>
    </reaction>
</comment>
<comment type="pathway">
    <text evidence="1">Cofactor biosynthesis; 7,8-dihydroneopterin triphosphate biosynthesis; 7,8-dihydroneopterin triphosphate from GTP: step 1/1.</text>
</comment>
<comment type="similarity">
    <text evidence="1">Belongs to the GTP cyclohydrolase IV family.</text>
</comment>
<keyword id="KW-0378">Hydrolase</keyword>